<proteinExistence type="inferred from homology"/>
<feature type="chain" id="PRO_0000158384" description="Ribose-5-phosphate isomerase A">
    <location>
        <begin position="1"/>
        <end position="220"/>
    </location>
</feature>
<feature type="active site" description="Proton acceptor" evidence="1">
    <location>
        <position position="102"/>
    </location>
</feature>
<feature type="binding site" evidence="1">
    <location>
        <begin position="25"/>
        <end position="28"/>
    </location>
    <ligand>
        <name>substrate</name>
    </ligand>
</feature>
<feature type="binding site" evidence="1">
    <location>
        <begin position="80"/>
        <end position="83"/>
    </location>
    <ligand>
        <name>substrate</name>
    </ligand>
</feature>
<feature type="binding site" evidence="1">
    <location>
        <begin position="93"/>
        <end position="96"/>
    </location>
    <ligand>
        <name>substrate</name>
    </ligand>
</feature>
<feature type="binding site" evidence="1">
    <location>
        <position position="120"/>
    </location>
    <ligand>
        <name>substrate</name>
    </ligand>
</feature>
<accession>Q81CG8</accession>
<comment type="function">
    <text evidence="1">Catalyzes the reversible conversion of ribose-5-phosphate to ribulose 5-phosphate.</text>
</comment>
<comment type="catalytic activity">
    <reaction evidence="1">
        <text>aldehydo-D-ribose 5-phosphate = D-ribulose 5-phosphate</text>
        <dbReference type="Rhea" id="RHEA:14657"/>
        <dbReference type="ChEBI" id="CHEBI:58121"/>
        <dbReference type="ChEBI" id="CHEBI:58273"/>
        <dbReference type="EC" id="5.3.1.6"/>
    </reaction>
</comment>
<comment type="pathway">
    <text evidence="1">Carbohydrate degradation; pentose phosphate pathway; D-ribose 5-phosphate from D-ribulose 5-phosphate (non-oxidative stage): step 1/1.</text>
</comment>
<comment type="subunit">
    <text evidence="1">Homodimer.</text>
</comment>
<comment type="similarity">
    <text evidence="1">Belongs to the ribose 5-phosphate isomerase family.</text>
</comment>
<organism>
    <name type="scientific">Bacillus cereus (strain ATCC 14579 / DSM 31 / CCUG 7414 / JCM 2152 / NBRC 15305 / NCIMB 9373 / NCTC 2599 / NRRL B-3711)</name>
    <dbReference type="NCBI Taxonomy" id="226900"/>
    <lineage>
        <taxon>Bacteria</taxon>
        <taxon>Bacillati</taxon>
        <taxon>Bacillota</taxon>
        <taxon>Bacilli</taxon>
        <taxon>Bacillales</taxon>
        <taxon>Bacillaceae</taxon>
        <taxon>Bacillus</taxon>
        <taxon>Bacillus cereus group</taxon>
    </lineage>
</organism>
<evidence type="ECO:0000255" key="1">
    <source>
        <dbReference type="HAMAP-Rule" id="MF_00170"/>
    </source>
</evidence>
<reference key="1">
    <citation type="journal article" date="2003" name="Nature">
        <title>Genome sequence of Bacillus cereus and comparative analysis with Bacillus anthracis.</title>
        <authorList>
            <person name="Ivanova N."/>
            <person name="Sorokin A."/>
            <person name="Anderson I."/>
            <person name="Galleron N."/>
            <person name="Candelon B."/>
            <person name="Kapatral V."/>
            <person name="Bhattacharyya A."/>
            <person name="Reznik G."/>
            <person name="Mikhailova N."/>
            <person name="Lapidus A."/>
            <person name="Chu L."/>
            <person name="Mazur M."/>
            <person name="Goltsman E."/>
            <person name="Larsen N."/>
            <person name="D'Souza M."/>
            <person name="Walunas T."/>
            <person name="Grechkin Y."/>
            <person name="Pusch G."/>
            <person name="Haselkorn R."/>
            <person name="Fonstein M."/>
            <person name="Ehrlich S.D."/>
            <person name="Overbeek R."/>
            <person name="Kyrpides N.C."/>
        </authorList>
    </citation>
    <scope>NUCLEOTIDE SEQUENCE [LARGE SCALE GENOMIC DNA]</scope>
    <source>
        <strain>ATCC 14579 / DSM 31 / CCUG 7414 / JCM 2152 / NBRC 15305 / NCIMB 9373 / NCTC 2599 / NRRL B-3711</strain>
    </source>
</reference>
<keyword id="KW-0413">Isomerase</keyword>
<keyword id="KW-1185">Reference proteome</keyword>
<dbReference type="EC" id="5.3.1.6" evidence="1"/>
<dbReference type="EMBL" id="AE016877">
    <property type="protein sequence ID" value="AAP09749.1"/>
    <property type="molecule type" value="Genomic_DNA"/>
</dbReference>
<dbReference type="RefSeq" id="NP_832548.1">
    <property type="nucleotide sequence ID" value="NC_004722.1"/>
</dbReference>
<dbReference type="RefSeq" id="WP_001049992.1">
    <property type="nucleotide sequence ID" value="NC_004722.1"/>
</dbReference>
<dbReference type="SMR" id="Q81CG8"/>
<dbReference type="STRING" id="226900.BC_2796"/>
<dbReference type="KEGG" id="bce:BC2796"/>
<dbReference type="PATRIC" id="fig|226900.8.peg.2852"/>
<dbReference type="HOGENOM" id="CLU_056590_1_0_9"/>
<dbReference type="OrthoDB" id="5870696at2"/>
<dbReference type="UniPathway" id="UPA00115">
    <property type="reaction ID" value="UER00412"/>
</dbReference>
<dbReference type="Proteomes" id="UP000001417">
    <property type="component" value="Chromosome"/>
</dbReference>
<dbReference type="GO" id="GO:0004751">
    <property type="term" value="F:ribose-5-phosphate isomerase activity"/>
    <property type="evidence" value="ECO:0007669"/>
    <property type="project" value="UniProtKB-UniRule"/>
</dbReference>
<dbReference type="GO" id="GO:0009052">
    <property type="term" value="P:pentose-phosphate shunt, non-oxidative branch"/>
    <property type="evidence" value="ECO:0007669"/>
    <property type="project" value="UniProtKB-UniRule"/>
</dbReference>
<dbReference type="CDD" id="cd01398">
    <property type="entry name" value="RPI_A"/>
    <property type="match status" value="1"/>
</dbReference>
<dbReference type="FunFam" id="3.40.50.1360:FF:000001">
    <property type="entry name" value="Ribose-5-phosphate isomerase A"/>
    <property type="match status" value="1"/>
</dbReference>
<dbReference type="Gene3D" id="3.30.70.260">
    <property type="match status" value="1"/>
</dbReference>
<dbReference type="Gene3D" id="3.40.50.1360">
    <property type="match status" value="1"/>
</dbReference>
<dbReference type="HAMAP" id="MF_00170">
    <property type="entry name" value="Rib_5P_isom_A"/>
    <property type="match status" value="1"/>
</dbReference>
<dbReference type="InterPro" id="IPR037171">
    <property type="entry name" value="NagB/RpiA_transferase-like"/>
</dbReference>
<dbReference type="InterPro" id="IPR020672">
    <property type="entry name" value="Ribose5P_isomerase_typA_subgr"/>
</dbReference>
<dbReference type="InterPro" id="IPR004788">
    <property type="entry name" value="Ribose5P_isomerase_type_A"/>
</dbReference>
<dbReference type="NCBIfam" id="NF001924">
    <property type="entry name" value="PRK00702.1"/>
    <property type="match status" value="1"/>
</dbReference>
<dbReference type="NCBIfam" id="TIGR00021">
    <property type="entry name" value="rpiA"/>
    <property type="match status" value="1"/>
</dbReference>
<dbReference type="PANTHER" id="PTHR11934">
    <property type="entry name" value="RIBOSE-5-PHOSPHATE ISOMERASE"/>
    <property type="match status" value="1"/>
</dbReference>
<dbReference type="PANTHER" id="PTHR11934:SF0">
    <property type="entry name" value="RIBOSE-5-PHOSPHATE ISOMERASE"/>
    <property type="match status" value="1"/>
</dbReference>
<dbReference type="Pfam" id="PF06026">
    <property type="entry name" value="Rib_5-P_isom_A"/>
    <property type="match status" value="1"/>
</dbReference>
<dbReference type="SUPFAM" id="SSF75445">
    <property type="entry name" value="D-ribose-5-phosphate isomerase (RpiA), lid domain"/>
    <property type="match status" value="1"/>
</dbReference>
<dbReference type="SUPFAM" id="SSF100950">
    <property type="entry name" value="NagB/RpiA/CoA transferase-like"/>
    <property type="match status" value="1"/>
</dbReference>
<gene>
    <name evidence="1" type="primary">rpiA</name>
    <name type="ordered locus">BC_2796</name>
</gene>
<name>RPIA_BACCR</name>
<sequence>MNLKQLAGEYAANFVNDGMKIGLGTGSTVYWTIQKLGERVKEGLSFQAVPTSKETEALAQQLNIPLISLNDVQSLDLTIDGADEIDSNLQLIKGGGGALLREKIVASSSKKLIIIADESKLVTHLGTFPLPIEIIPFSWKQTENKIQSLGCQTTLRLKNNETYITDNNNMIIDCIFPNHISNPVHLHTQLKMITGVVETGLFISMTSTAIIGTKNGIKKL</sequence>
<protein>
    <recommendedName>
        <fullName evidence="1">Ribose-5-phosphate isomerase A</fullName>
        <ecNumber evidence="1">5.3.1.6</ecNumber>
    </recommendedName>
    <alternativeName>
        <fullName evidence="1">Phosphoriboisomerase A</fullName>
        <shortName evidence="1">PRI</shortName>
    </alternativeName>
</protein>